<reference key="1">
    <citation type="journal article" date="2009" name="Proc. Natl. Acad. Sci. U.S.A.">
        <title>Eukaryote-to-eukaryote gene transfer events revealed by the genome sequence of the wine yeast Saccharomyces cerevisiae EC1118.</title>
        <authorList>
            <person name="Novo M."/>
            <person name="Bigey F."/>
            <person name="Beyne E."/>
            <person name="Galeote V."/>
            <person name="Gavory F."/>
            <person name="Mallet S."/>
            <person name="Cambon B."/>
            <person name="Legras J.-L."/>
            <person name="Wincker P."/>
            <person name="Casaregola S."/>
            <person name="Dequin S."/>
        </authorList>
    </citation>
    <scope>NUCLEOTIDE SEQUENCE [LARGE SCALE GENOMIC DNA]</scope>
    <source>
        <strain>Lalvin EC1118 / Prise de mousse</strain>
    </source>
</reference>
<dbReference type="EMBL" id="FN393082">
    <property type="protein sequence ID" value="CAY81926.1"/>
    <property type="molecule type" value="Genomic_DNA"/>
</dbReference>
<dbReference type="SMR" id="C8ZEW0"/>
<dbReference type="HOGENOM" id="CLU_2158879_0_0_1"/>
<dbReference type="OrthoDB" id="39678at4893"/>
<dbReference type="Proteomes" id="UP000000286">
    <property type="component" value="Chromosome XIII, Scaffold EC1118_1M3"/>
</dbReference>
<dbReference type="InterPro" id="IPR020485">
    <property type="entry name" value="Spg4"/>
</dbReference>
<dbReference type="Pfam" id="PF17325">
    <property type="entry name" value="SPG4"/>
    <property type="match status" value="1"/>
</dbReference>
<accession>C8ZEW0</accession>
<protein>
    <recommendedName>
        <fullName>Stationary phase protein 4</fullName>
    </recommendedName>
</protein>
<feature type="chain" id="PRO_0000405004" description="Stationary phase protein 4">
    <location>
        <begin position="1"/>
        <end position="115"/>
    </location>
</feature>
<feature type="region of interest" description="Disordered" evidence="2">
    <location>
        <begin position="16"/>
        <end position="77"/>
    </location>
</feature>
<feature type="compositionally biased region" description="Polar residues" evidence="2">
    <location>
        <begin position="25"/>
        <end position="37"/>
    </location>
</feature>
<feature type="compositionally biased region" description="Polar residues" evidence="2">
    <location>
        <begin position="50"/>
        <end position="66"/>
    </location>
</feature>
<evidence type="ECO:0000250" key="1"/>
<evidence type="ECO:0000256" key="2">
    <source>
        <dbReference type="SAM" id="MobiDB-lite"/>
    </source>
</evidence>
<evidence type="ECO:0000305" key="3"/>
<organism>
    <name type="scientific">Saccharomyces cerevisiae (strain Lalvin EC1118 / Prise de mousse)</name>
    <name type="common">Baker's yeast</name>
    <dbReference type="NCBI Taxonomy" id="643680"/>
    <lineage>
        <taxon>Eukaryota</taxon>
        <taxon>Fungi</taxon>
        <taxon>Dikarya</taxon>
        <taxon>Ascomycota</taxon>
        <taxon>Saccharomycotina</taxon>
        <taxon>Saccharomycetes</taxon>
        <taxon>Saccharomycetales</taxon>
        <taxon>Saccharomycetaceae</taxon>
        <taxon>Saccharomyces</taxon>
    </lineage>
</organism>
<sequence>MGSFWDAFAVYDKKKHADPSVYGGNHNNTGDSKTQVMFSKEYRQPRTHQQENLQSMRRSSIGSQDSSDVEDVKEGRLPAEVEIPKNVDISNMSQGEFLRLYESLRRGEPDNKVNR</sequence>
<comment type="function">
    <text evidence="1">Stationary phase-essential protein not required for growth on nonfermentable carbon sources.</text>
</comment>
<comment type="similarity">
    <text evidence="3">Belongs to the SPG4 family.</text>
</comment>
<name>SPG4_YEAS8</name>
<proteinExistence type="inferred from homology"/>
<gene>
    <name type="primary">SPG4</name>
    <name type="ORF">EC1118_1M3_2795g</name>
</gene>